<evidence type="ECO:0000255" key="1">
    <source>
        <dbReference type="HAMAP-Rule" id="MF_00801"/>
    </source>
</evidence>
<dbReference type="EC" id="3.1.21.7" evidence="1"/>
<dbReference type="EMBL" id="CP000802">
    <property type="protein sequence ID" value="ABV08402.1"/>
    <property type="molecule type" value="Genomic_DNA"/>
</dbReference>
<dbReference type="RefSeq" id="WP_000362392.1">
    <property type="nucleotide sequence ID" value="NC_009800.1"/>
</dbReference>
<dbReference type="SMR" id="A8A798"/>
<dbReference type="GeneID" id="93777896"/>
<dbReference type="KEGG" id="ecx:EcHS_A4232"/>
<dbReference type="HOGENOM" id="CLU_047631_1_0_6"/>
<dbReference type="GO" id="GO:0005737">
    <property type="term" value="C:cytoplasm"/>
    <property type="evidence" value="ECO:0007669"/>
    <property type="project" value="UniProtKB-SubCell"/>
</dbReference>
<dbReference type="GO" id="GO:0043737">
    <property type="term" value="F:deoxyribonuclease V activity"/>
    <property type="evidence" value="ECO:0007669"/>
    <property type="project" value="UniProtKB-UniRule"/>
</dbReference>
<dbReference type="GO" id="GO:0000287">
    <property type="term" value="F:magnesium ion binding"/>
    <property type="evidence" value="ECO:0007669"/>
    <property type="project" value="UniProtKB-UniRule"/>
</dbReference>
<dbReference type="GO" id="GO:0016891">
    <property type="term" value="F:RNA endonuclease activity, producing 5'-phosphomonoesters"/>
    <property type="evidence" value="ECO:0007669"/>
    <property type="project" value="TreeGrafter"/>
</dbReference>
<dbReference type="GO" id="GO:0003727">
    <property type="term" value="F:single-stranded RNA binding"/>
    <property type="evidence" value="ECO:0007669"/>
    <property type="project" value="TreeGrafter"/>
</dbReference>
<dbReference type="GO" id="GO:0006281">
    <property type="term" value="P:DNA repair"/>
    <property type="evidence" value="ECO:0007669"/>
    <property type="project" value="UniProtKB-UniRule"/>
</dbReference>
<dbReference type="CDD" id="cd06559">
    <property type="entry name" value="Endonuclease_V"/>
    <property type="match status" value="1"/>
</dbReference>
<dbReference type="FunFam" id="3.30.2170.10:FF:000001">
    <property type="entry name" value="Endonuclease V"/>
    <property type="match status" value="1"/>
</dbReference>
<dbReference type="Gene3D" id="3.30.2170.10">
    <property type="entry name" value="archaeoglobus fulgidus dsm 4304 superfamily"/>
    <property type="match status" value="1"/>
</dbReference>
<dbReference type="HAMAP" id="MF_00801">
    <property type="entry name" value="Endonuclease_5"/>
    <property type="match status" value="1"/>
</dbReference>
<dbReference type="InterPro" id="IPR007581">
    <property type="entry name" value="Endonuclease-V"/>
</dbReference>
<dbReference type="NCBIfam" id="NF008629">
    <property type="entry name" value="PRK11617.1"/>
    <property type="match status" value="1"/>
</dbReference>
<dbReference type="PANTHER" id="PTHR28511">
    <property type="entry name" value="ENDONUCLEASE V"/>
    <property type="match status" value="1"/>
</dbReference>
<dbReference type="PANTHER" id="PTHR28511:SF1">
    <property type="entry name" value="ENDONUCLEASE V"/>
    <property type="match status" value="1"/>
</dbReference>
<dbReference type="Pfam" id="PF04493">
    <property type="entry name" value="Endonuclease_5"/>
    <property type="match status" value="1"/>
</dbReference>
<gene>
    <name evidence="1" type="primary">nfi</name>
    <name type="ordered locus">EcHS_A4232</name>
</gene>
<sequence>MDLASLRAQQIELASSVIREDRLDKDPPDLIAGADVGFEQGGEVTRAAMVLLKYPSLELVEYKVARIATTMPYIPGFLSFREYPALLAAWEMLSQKPDLVFVDGHGISHPRRLGVASHFGLMVDVPTIGVAKKRLCGKFEPLSSEPGALAPLMDKGEQLAWVWRSKARCNPLFIATGHRVSVDSALAWVQRCMKGYRLPEPTRWADAVASERPAFVRYTANQP</sequence>
<organism>
    <name type="scientific">Escherichia coli O9:H4 (strain HS)</name>
    <dbReference type="NCBI Taxonomy" id="331112"/>
    <lineage>
        <taxon>Bacteria</taxon>
        <taxon>Pseudomonadati</taxon>
        <taxon>Pseudomonadota</taxon>
        <taxon>Gammaproteobacteria</taxon>
        <taxon>Enterobacterales</taxon>
        <taxon>Enterobacteriaceae</taxon>
        <taxon>Escherichia</taxon>
    </lineage>
</organism>
<feature type="chain" id="PRO_1000062262" description="Endonuclease V">
    <location>
        <begin position="1"/>
        <end position="223"/>
    </location>
</feature>
<feature type="binding site" evidence="1">
    <location>
        <position position="35"/>
    </location>
    <ligand>
        <name>Mg(2+)</name>
        <dbReference type="ChEBI" id="CHEBI:18420"/>
    </ligand>
</feature>
<feature type="binding site" evidence="1">
    <location>
        <position position="103"/>
    </location>
    <ligand>
        <name>Mg(2+)</name>
        <dbReference type="ChEBI" id="CHEBI:18420"/>
    </ligand>
</feature>
<feature type="site" description="Interaction with target DNA" evidence="1">
    <location>
        <position position="73"/>
    </location>
</feature>
<proteinExistence type="inferred from homology"/>
<accession>A8A798</accession>
<comment type="function">
    <text evidence="1">DNA repair enzyme involved in the repair of deaminated bases. Selectively cleaves double-stranded DNA at the second phosphodiester bond 3' to a deoxyinosine leaving behind the intact lesion on the nicked DNA.</text>
</comment>
<comment type="catalytic activity">
    <reaction evidence="1">
        <text>Endonucleolytic cleavage at apurinic or apyrimidinic sites to products with a 5'-phosphate.</text>
        <dbReference type="EC" id="3.1.21.7"/>
    </reaction>
</comment>
<comment type="cofactor">
    <cofactor evidence="1">
        <name>Mg(2+)</name>
        <dbReference type="ChEBI" id="CHEBI:18420"/>
    </cofactor>
</comment>
<comment type="subcellular location">
    <subcellularLocation>
        <location evidence="1">Cytoplasm</location>
    </subcellularLocation>
</comment>
<comment type="similarity">
    <text evidence="1">Belongs to the endonuclease V family.</text>
</comment>
<keyword id="KW-0963">Cytoplasm</keyword>
<keyword id="KW-0227">DNA damage</keyword>
<keyword id="KW-0234">DNA repair</keyword>
<keyword id="KW-0255">Endonuclease</keyword>
<keyword id="KW-0378">Hydrolase</keyword>
<keyword id="KW-0460">Magnesium</keyword>
<keyword id="KW-0479">Metal-binding</keyword>
<keyword id="KW-0540">Nuclease</keyword>
<reference key="1">
    <citation type="journal article" date="2008" name="J. Bacteriol.">
        <title>The pangenome structure of Escherichia coli: comparative genomic analysis of E. coli commensal and pathogenic isolates.</title>
        <authorList>
            <person name="Rasko D.A."/>
            <person name="Rosovitz M.J."/>
            <person name="Myers G.S.A."/>
            <person name="Mongodin E.F."/>
            <person name="Fricke W.F."/>
            <person name="Gajer P."/>
            <person name="Crabtree J."/>
            <person name="Sebaihia M."/>
            <person name="Thomson N.R."/>
            <person name="Chaudhuri R."/>
            <person name="Henderson I.R."/>
            <person name="Sperandio V."/>
            <person name="Ravel J."/>
        </authorList>
    </citation>
    <scope>NUCLEOTIDE SEQUENCE [LARGE SCALE GENOMIC DNA]</scope>
    <source>
        <strain>HS</strain>
    </source>
</reference>
<name>NFI_ECOHS</name>
<protein>
    <recommendedName>
        <fullName evidence="1">Endonuclease V</fullName>
        <ecNumber evidence="1">3.1.21.7</ecNumber>
    </recommendedName>
    <alternativeName>
        <fullName evidence="1">Deoxyinosine 3'endonuclease</fullName>
    </alternativeName>
    <alternativeName>
        <fullName evidence="1">Deoxyribonuclease V</fullName>
        <shortName evidence="1">DNase V</shortName>
    </alternativeName>
</protein>